<protein>
    <recommendedName>
        <fullName evidence="1">Bifunctional polymyxin resistance protein ArnA</fullName>
    </recommendedName>
    <domain>
        <recommendedName>
            <fullName evidence="1">UDP-4-amino-4-deoxy-L-arabinose formyltransferase</fullName>
            <ecNumber evidence="1">2.1.2.13</ecNumber>
        </recommendedName>
        <alternativeName>
            <fullName evidence="1">ArnAFT</fullName>
        </alternativeName>
        <alternativeName>
            <fullName evidence="1">UDP-L-Ara4N formyltransferase</fullName>
        </alternativeName>
    </domain>
    <domain>
        <recommendedName>
            <fullName evidence="1">UDP-glucuronic acid oxidase, UDP-4-keto-hexauronic acid decarboxylating</fullName>
            <ecNumber evidence="1">1.1.1.305</ecNumber>
        </recommendedName>
        <alternativeName>
            <fullName evidence="1">ArnADH</fullName>
        </alternativeName>
        <alternativeName>
            <fullName evidence="1">UDP-GlcUA decarboxylase</fullName>
        </alternativeName>
        <alternativeName>
            <fullName evidence="1">UDP-glucuronic acid dehydrogenase</fullName>
        </alternativeName>
    </domain>
</protein>
<proteinExistence type="inferred from homology"/>
<reference key="1">
    <citation type="journal article" date="2011" name="J. Bacteriol.">
        <title>Comparative genomics of 28 Salmonella enterica isolates: evidence for CRISPR-mediated adaptive sublineage evolution.</title>
        <authorList>
            <person name="Fricke W.F."/>
            <person name="Mammel M.K."/>
            <person name="McDermott P.F."/>
            <person name="Tartera C."/>
            <person name="White D.G."/>
            <person name="Leclerc J.E."/>
            <person name="Ravel J."/>
            <person name="Cebula T.A."/>
        </authorList>
    </citation>
    <scope>NUCLEOTIDE SEQUENCE [LARGE SCALE GENOMIC DNA]</scope>
    <source>
        <strain>SL254</strain>
    </source>
</reference>
<accession>B4SYX1</accession>
<feature type="chain" id="PRO_1000137950" description="Bifunctional polymyxin resistance protein ArnA">
    <location>
        <begin position="1"/>
        <end position="660"/>
    </location>
</feature>
<feature type="region of interest" description="Formyltransferase ArnAFT">
    <location>
        <begin position="1"/>
        <end position="304"/>
    </location>
</feature>
<feature type="region of interest" description="Dehydrogenase ArnADH">
    <location>
        <begin position="314"/>
        <end position="660"/>
    </location>
</feature>
<feature type="active site" description="Proton donor; for formyltransferase activity" evidence="1">
    <location>
        <position position="104"/>
    </location>
</feature>
<feature type="active site" description="Proton acceptor; for decarboxylase activity" evidence="1">
    <location>
        <position position="434"/>
    </location>
</feature>
<feature type="active site" description="Proton donor; for decarboxylase activity" evidence="1">
    <location>
        <position position="619"/>
    </location>
</feature>
<feature type="binding site" evidence="1">
    <location>
        <position position="114"/>
    </location>
    <ligand>
        <name>(6R)-10-formyltetrahydrofolate</name>
        <dbReference type="ChEBI" id="CHEBI:195366"/>
    </ligand>
</feature>
<feature type="binding site" evidence="1">
    <location>
        <begin position="136"/>
        <end position="140"/>
    </location>
    <ligand>
        <name>(6R)-10-formyltetrahydrofolate</name>
        <dbReference type="ChEBI" id="CHEBI:195366"/>
    </ligand>
</feature>
<feature type="binding site" evidence="1">
    <location>
        <position position="347"/>
    </location>
    <ligand>
        <name>NAD(+)</name>
        <dbReference type="ChEBI" id="CHEBI:57540"/>
    </ligand>
</feature>
<feature type="binding site" evidence="1">
    <location>
        <begin position="368"/>
        <end position="369"/>
    </location>
    <ligand>
        <name>NAD(+)</name>
        <dbReference type="ChEBI" id="CHEBI:57540"/>
    </ligand>
</feature>
<feature type="binding site" evidence="1">
    <location>
        <position position="393"/>
    </location>
    <ligand>
        <name>UDP-alpha-D-glucuronate</name>
        <dbReference type="ChEBI" id="CHEBI:58052"/>
    </ligand>
</feature>
<feature type="binding site" evidence="1">
    <location>
        <position position="398"/>
    </location>
    <ligand>
        <name>UDP-alpha-D-glucuronate</name>
        <dbReference type="ChEBI" id="CHEBI:58052"/>
    </ligand>
</feature>
<feature type="binding site" evidence="1">
    <location>
        <begin position="432"/>
        <end position="433"/>
    </location>
    <ligand>
        <name>UDP-alpha-D-glucuronate</name>
        <dbReference type="ChEBI" id="CHEBI:58052"/>
    </ligand>
</feature>
<feature type="binding site" evidence="1">
    <location>
        <position position="460"/>
    </location>
    <ligand>
        <name>UDP-alpha-D-glucuronate</name>
        <dbReference type="ChEBI" id="CHEBI:58052"/>
    </ligand>
</feature>
<feature type="binding site" evidence="1">
    <location>
        <position position="492"/>
    </location>
    <ligand>
        <name>UDP-alpha-D-glucuronate</name>
        <dbReference type="ChEBI" id="CHEBI:58052"/>
    </ligand>
</feature>
<feature type="binding site" evidence="1">
    <location>
        <begin position="526"/>
        <end position="535"/>
    </location>
    <ligand>
        <name>UDP-alpha-D-glucuronate</name>
        <dbReference type="ChEBI" id="CHEBI:58052"/>
    </ligand>
</feature>
<feature type="binding site" evidence="1">
    <location>
        <position position="613"/>
    </location>
    <ligand>
        <name>UDP-alpha-D-glucuronate</name>
        <dbReference type="ChEBI" id="CHEBI:58052"/>
    </ligand>
</feature>
<feature type="site" description="Transition state stabilizer" evidence="1">
    <location>
        <position position="102"/>
    </location>
</feature>
<feature type="site" description="Raises pKa of active site His" evidence="1">
    <location>
        <position position="140"/>
    </location>
</feature>
<dbReference type="EC" id="2.1.2.13" evidence="1"/>
<dbReference type="EC" id="1.1.1.305" evidence="1"/>
<dbReference type="EMBL" id="CP001113">
    <property type="protein sequence ID" value="ACF64868.1"/>
    <property type="molecule type" value="Genomic_DNA"/>
</dbReference>
<dbReference type="RefSeq" id="WP_000648772.1">
    <property type="nucleotide sequence ID" value="NZ_CCMR01000001.1"/>
</dbReference>
<dbReference type="SMR" id="B4SYX1"/>
<dbReference type="KEGG" id="see:SNSL254_A2484"/>
<dbReference type="HOGENOM" id="CLU_007383_23_2_6"/>
<dbReference type="UniPathway" id="UPA00030"/>
<dbReference type="UniPathway" id="UPA00032">
    <property type="reaction ID" value="UER00492"/>
</dbReference>
<dbReference type="UniPathway" id="UPA00032">
    <property type="reaction ID" value="UER00494"/>
</dbReference>
<dbReference type="Proteomes" id="UP000008824">
    <property type="component" value="Chromosome"/>
</dbReference>
<dbReference type="GO" id="GO:0016020">
    <property type="term" value="C:membrane"/>
    <property type="evidence" value="ECO:0007669"/>
    <property type="project" value="GOC"/>
</dbReference>
<dbReference type="GO" id="GO:0016831">
    <property type="term" value="F:carboxy-lyase activity"/>
    <property type="evidence" value="ECO:0007669"/>
    <property type="project" value="InterPro"/>
</dbReference>
<dbReference type="GO" id="GO:0099619">
    <property type="term" value="F:UDP-4-amino-4-deoxy-L-arabinose formyltransferase activity"/>
    <property type="evidence" value="ECO:0007669"/>
    <property type="project" value="UniProtKB-EC"/>
</dbReference>
<dbReference type="GO" id="GO:0099618">
    <property type="term" value="F:UDP-glucuronate dehydrogenase activity"/>
    <property type="evidence" value="ECO:0007669"/>
    <property type="project" value="UniProtKB-EC"/>
</dbReference>
<dbReference type="GO" id="GO:0009245">
    <property type="term" value="P:lipid A biosynthetic process"/>
    <property type="evidence" value="ECO:0007669"/>
    <property type="project" value="UniProtKB-KW"/>
</dbReference>
<dbReference type="GO" id="GO:0009103">
    <property type="term" value="P:lipopolysaccharide biosynthetic process"/>
    <property type="evidence" value="ECO:0007669"/>
    <property type="project" value="UniProtKB-UniRule"/>
</dbReference>
<dbReference type="GO" id="GO:0046677">
    <property type="term" value="P:response to antibiotic"/>
    <property type="evidence" value="ECO:0007669"/>
    <property type="project" value="UniProtKB-KW"/>
</dbReference>
<dbReference type="CDD" id="cd08702">
    <property type="entry name" value="Arna_FMT_C"/>
    <property type="match status" value="1"/>
</dbReference>
<dbReference type="CDD" id="cd05257">
    <property type="entry name" value="Arna_like_SDR_e"/>
    <property type="match status" value="1"/>
</dbReference>
<dbReference type="FunFam" id="3.40.50.720:FF:000197">
    <property type="entry name" value="Bifunctional polymyxin resistance protein ArnA"/>
    <property type="match status" value="1"/>
</dbReference>
<dbReference type="Gene3D" id="3.40.50.12230">
    <property type="match status" value="1"/>
</dbReference>
<dbReference type="Gene3D" id="3.40.50.720">
    <property type="entry name" value="NAD(P)-binding Rossmann-like Domain"/>
    <property type="match status" value="1"/>
</dbReference>
<dbReference type="HAMAP" id="MF_01166">
    <property type="entry name" value="ArnA"/>
    <property type="match status" value="1"/>
</dbReference>
<dbReference type="InterPro" id="IPR045869">
    <property type="entry name" value="Arna-like_SDR_e"/>
</dbReference>
<dbReference type="InterPro" id="IPR021168">
    <property type="entry name" value="Bifun_polymyxin_resist_ArnA"/>
</dbReference>
<dbReference type="InterPro" id="IPR001509">
    <property type="entry name" value="Epimerase_deHydtase"/>
</dbReference>
<dbReference type="InterPro" id="IPR005793">
    <property type="entry name" value="Formyl_trans_C"/>
</dbReference>
<dbReference type="InterPro" id="IPR002376">
    <property type="entry name" value="Formyl_transf_N"/>
</dbReference>
<dbReference type="InterPro" id="IPR036477">
    <property type="entry name" value="Formyl_transf_N_sf"/>
</dbReference>
<dbReference type="InterPro" id="IPR011034">
    <property type="entry name" value="Formyl_transferase-like_C_sf"/>
</dbReference>
<dbReference type="InterPro" id="IPR050177">
    <property type="entry name" value="Lipid_A_modif_metabolic_enz"/>
</dbReference>
<dbReference type="InterPro" id="IPR036291">
    <property type="entry name" value="NAD(P)-bd_dom_sf"/>
</dbReference>
<dbReference type="NCBIfam" id="NF005414">
    <property type="entry name" value="PRK06988.1"/>
    <property type="match status" value="1"/>
</dbReference>
<dbReference type="NCBIfam" id="NF005998">
    <property type="entry name" value="PRK08125.1"/>
    <property type="match status" value="1"/>
</dbReference>
<dbReference type="NCBIfam" id="NF008872">
    <property type="entry name" value="PRK11908.1"/>
    <property type="match status" value="1"/>
</dbReference>
<dbReference type="PANTHER" id="PTHR43245">
    <property type="entry name" value="BIFUNCTIONAL POLYMYXIN RESISTANCE PROTEIN ARNA"/>
    <property type="match status" value="1"/>
</dbReference>
<dbReference type="PANTHER" id="PTHR43245:SF13">
    <property type="entry name" value="UDP-D-APIOSE_UDP-D-XYLOSE SYNTHASE 2"/>
    <property type="match status" value="1"/>
</dbReference>
<dbReference type="Pfam" id="PF01370">
    <property type="entry name" value="Epimerase"/>
    <property type="match status" value="1"/>
</dbReference>
<dbReference type="Pfam" id="PF02911">
    <property type="entry name" value="Formyl_trans_C"/>
    <property type="match status" value="1"/>
</dbReference>
<dbReference type="Pfam" id="PF00551">
    <property type="entry name" value="Formyl_trans_N"/>
    <property type="match status" value="1"/>
</dbReference>
<dbReference type="PIRSF" id="PIRSF036506">
    <property type="entry name" value="Bifun_polymyxin_resist_ArnA"/>
    <property type="match status" value="1"/>
</dbReference>
<dbReference type="SUPFAM" id="SSF50486">
    <property type="entry name" value="FMT C-terminal domain-like"/>
    <property type="match status" value="1"/>
</dbReference>
<dbReference type="SUPFAM" id="SSF53328">
    <property type="entry name" value="Formyltransferase"/>
    <property type="match status" value="1"/>
</dbReference>
<dbReference type="SUPFAM" id="SSF51735">
    <property type="entry name" value="NAD(P)-binding Rossmann-fold domains"/>
    <property type="match status" value="1"/>
</dbReference>
<name>ARNA_SALNS</name>
<organism>
    <name type="scientific">Salmonella newport (strain SL254)</name>
    <dbReference type="NCBI Taxonomy" id="423368"/>
    <lineage>
        <taxon>Bacteria</taxon>
        <taxon>Pseudomonadati</taxon>
        <taxon>Pseudomonadota</taxon>
        <taxon>Gammaproteobacteria</taxon>
        <taxon>Enterobacterales</taxon>
        <taxon>Enterobacteriaceae</taxon>
        <taxon>Salmonella</taxon>
    </lineage>
</organism>
<gene>
    <name evidence="1" type="primary">arnA</name>
    <name type="ordered locus">SNSL254_A2484</name>
</gene>
<evidence type="ECO:0000255" key="1">
    <source>
        <dbReference type="HAMAP-Rule" id="MF_01166"/>
    </source>
</evidence>
<sequence>MKAVIFAYHDMGCQGVQAVLDAGYEIAAIFTHADNPAENTFFGSVSRLAAGLGIPVYAPDNVNHPIWVDRIAELAPDIIFSFYYRNLLSEEILHLAPAGAFNLHGSLLPAYRGRAPLNWVLVNGESETGVTLHRMVKRADAGEIVASQRVAIAQDDVALTLHHKLCQAARQLLNSILPTMKCGDIPSVPQRESDATYYGRRRPEDGLIDWHKPVSTVHNLVRAVAAPWPGAFSYNGSQKFTIWSSRICPDAQGALPGSVISVSPLRVACADGALEIITGQAGDGITVQGSQLAQTLGLVAGARLNRPPATSGKRRIRVLILGVNGFIGNHLTERLLNEENYEVYGMDIGSNAISRFLLHPRFHFVEGDISIHSEWIEYHVKKCDVVLPLVAIATPIEYTRNPLRVFELDFEENLRIIRYCVKYRKRVVFPSTSEVYGMCTDASFDEDKSNLIVGPVNKPRWIYSVSKQLLDRVIWAYGEKEGLRFTLFRPFNWMGPRLDSLNAARIGSSRAITQLILNLVEGTPIKLIDGGQQKRCFTDIRDGIEALFRIIVNEGDRCDGKIINIGNPDNEASIQELATLLLDSFDKHPLRCHFPPFAGFQVVESRSYYGKGYQDVAHRKPSIDNARRCLGWEPSIAMRDTVEETLDFFLRSVDVAERAS</sequence>
<comment type="function">
    <text evidence="1">Bifunctional enzyme that catalyzes the oxidative decarboxylation of UDP-glucuronic acid (UDP-GlcUA) to UDP-4-keto-arabinose (UDP-Ara4O) and the addition of a formyl group to UDP-4-amino-4-deoxy-L-arabinose (UDP-L-Ara4N) to form UDP-L-4-formamido-arabinose (UDP-L-Ara4FN). The modified arabinose is attached to lipid A and is required for resistance to polymyxin and cationic antimicrobial peptides.</text>
</comment>
<comment type="catalytic activity">
    <reaction evidence="1">
        <text>UDP-alpha-D-glucuronate + NAD(+) = UDP-beta-L-threo-pentopyranos-4-ulose + CO2 + NADH</text>
        <dbReference type="Rhea" id="RHEA:24702"/>
        <dbReference type="ChEBI" id="CHEBI:16526"/>
        <dbReference type="ChEBI" id="CHEBI:57540"/>
        <dbReference type="ChEBI" id="CHEBI:57945"/>
        <dbReference type="ChEBI" id="CHEBI:58052"/>
        <dbReference type="ChEBI" id="CHEBI:58710"/>
        <dbReference type="EC" id="1.1.1.305"/>
    </reaction>
</comment>
<comment type="catalytic activity">
    <reaction evidence="1">
        <text>UDP-4-amino-4-deoxy-beta-L-arabinose + (6R)-10-formyltetrahydrofolate = UDP-4-deoxy-4-formamido-beta-L-arabinose + (6S)-5,6,7,8-tetrahydrofolate + H(+)</text>
        <dbReference type="Rhea" id="RHEA:24706"/>
        <dbReference type="ChEBI" id="CHEBI:15378"/>
        <dbReference type="ChEBI" id="CHEBI:57453"/>
        <dbReference type="ChEBI" id="CHEBI:58708"/>
        <dbReference type="ChEBI" id="CHEBI:58709"/>
        <dbReference type="ChEBI" id="CHEBI:195366"/>
        <dbReference type="EC" id="2.1.2.13"/>
    </reaction>
</comment>
<comment type="pathway">
    <text evidence="1">Nucleotide-sugar biosynthesis; UDP-4-deoxy-4-formamido-beta-L-arabinose biosynthesis; UDP-4-deoxy-4-formamido-beta-L-arabinose from UDP-alpha-D-glucuronate: step 1/3.</text>
</comment>
<comment type="pathway">
    <text evidence="1">Nucleotide-sugar biosynthesis; UDP-4-deoxy-4-formamido-beta-L-arabinose biosynthesis; UDP-4-deoxy-4-formamido-beta-L-arabinose from UDP-alpha-D-glucuronate: step 3/3.</text>
</comment>
<comment type="pathway">
    <text evidence="1">Bacterial outer membrane biogenesis; lipopolysaccharide biosynthesis.</text>
</comment>
<comment type="subunit">
    <text evidence="1">Homohexamer, formed by a dimer of trimers.</text>
</comment>
<comment type="similarity">
    <text evidence="1">In the N-terminal section; belongs to the Fmt family. UDP-L-Ara4N formyltransferase subfamily.</text>
</comment>
<comment type="similarity">
    <text evidence="1">In the C-terminal section; belongs to the NAD(P)-dependent epimerase/dehydratase family. UDP-glucuronic acid decarboxylase subfamily.</text>
</comment>
<keyword id="KW-0046">Antibiotic resistance</keyword>
<keyword id="KW-0441">Lipid A biosynthesis</keyword>
<keyword id="KW-0444">Lipid biosynthesis</keyword>
<keyword id="KW-0443">Lipid metabolism</keyword>
<keyword id="KW-0448">Lipopolysaccharide biosynthesis</keyword>
<keyword id="KW-0511">Multifunctional enzyme</keyword>
<keyword id="KW-0520">NAD</keyword>
<keyword id="KW-0560">Oxidoreductase</keyword>
<keyword id="KW-0808">Transferase</keyword>